<keyword id="KW-0030">Aminoacyl-tRNA synthetase</keyword>
<keyword id="KW-0067">ATP-binding</keyword>
<keyword id="KW-0963">Cytoplasm</keyword>
<keyword id="KW-0436">Ligase</keyword>
<keyword id="KW-0479">Metal-binding</keyword>
<keyword id="KW-0547">Nucleotide-binding</keyword>
<keyword id="KW-0648">Protein biosynthesis</keyword>
<keyword id="KW-1185">Reference proteome</keyword>
<keyword id="KW-0862">Zinc</keyword>
<proteinExistence type="inferred from homology"/>
<organism>
    <name type="scientific">Alkalilimnicola ehrlichii (strain ATCC BAA-1101 / DSM 17681 / MLHE-1)</name>
    <dbReference type="NCBI Taxonomy" id="187272"/>
    <lineage>
        <taxon>Bacteria</taxon>
        <taxon>Pseudomonadati</taxon>
        <taxon>Pseudomonadota</taxon>
        <taxon>Gammaproteobacteria</taxon>
        <taxon>Chromatiales</taxon>
        <taxon>Ectothiorhodospiraceae</taxon>
        <taxon>Alkalilimnicola</taxon>
    </lineage>
</organism>
<dbReference type="EC" id="6.1.1.5" evidence="1"/>
<dbReference type="EMBL" id="CP000453">
    <property type="protein sequence ID" value="ABI56206.1"/>
    <property type="molecule type" value="Genomic_DNA"/>
</dbReference>
<dbReference type="RefSeq" id="WP_011628601.1">
    <property type="nucleotide sequence ID" value="NC_008340.1"/>
</dbReference>
<dbReference type="SMR" id="Q0AAD1"/>
<dbReference type="KEGG" id="aeh:Mlg_0852"/>
<dbReference type="eggNOG" id="COG0060">
    <property type="taxonomic scope" value="Bacteria"/>
</dbReference>
<dbReference type="HOGENOM" id="CLU_001493_7_0_6"/>
<dbReference type="OrthoDB" id="9810365at2"/>
<dbReference type="Proteomes" id="UP000001962">
    <property type="component" value="Chromosome"/>
</dbReference>
<dbReference type="GO" id="GO:0005829">
    <property type="term" value="C:cytosol"/>
    <property type="evidence" value="ECO:0007669"/>
    <property type="project" value="TreeGrafter"/>
</dbReference>
<dbReference type="GO" id="GO:0002161">
    <property type="term" value="F:aminoacyl-tRNA deacylase activity"/>
    <property type="evidence" value="ECO:0007669"/>
    <property type="project" value="InterPro"/>
</dbReference>
<dbReference type="GO" id="GO:0005524">
    <property type="term" value="F:ATP binding"/>
    <property type="evidence" value="ECO:0007669"/>
    <property type="project" value="UniProtKB-UniRule"/>
</dbReference>
<dbReference type="GO" id="GO:0004822">
    <property type="term" value="F:isoleucine-tRNA ligase activity"/>
    <property type="evidence" value="ECO:0007669"/>
    <property type="project" value="UniProtKB-UniRule"/>
</dbReference>
<dbReference type="GO" id="GO:0000049">
    <property type="term" value="F:tRNA binding"/>
    <property type="evidence" value="ECO:0007669"/>
    <property type="project" value="InterPro"/>
</dbReference>
<dbReference type="GO" id="GO:0008270">
    <property type="term" value="F:zinc ion binding"/>
    <property type="evidence" value="ECO:0007669"/>
    <property type="project" value="UniProtKB-UniRule"/>
</dbReference>
<dbReference type="GO" id="GO:0006428">
    <property type="term" value="P:isoleucyl-tRNA aminoacylation"/>
    <property type="evidence" value="ECO:0007669"/>
    <property type="project" value="UniProtKB-UniRule"/>
</dbReference>
<dbReference type="CDD" id="cd07960">
    <property type="entry name" value="Anticodon_Ia_Ile_BEm"/>
    <property type="match status" value="1"/>
</dbReference>
<dbReference type="FunFam" id="1.10.730.20:FF:000001">
    <property type="entry name" value="Isoleucine--tRNA ligase"/>
    <property type="match status" value="1"/>
</dbReference>
<dbReference type="FunFam" id="3.40.50.620:FF:000042">
    <property type="entry name" value="Isoleucine--tRNA ligase"/>
    <property type="match status" value="1"/>
</dbReference>
<dbReference type="FunFam" id="3.40.50.620:FF:000048">
    <property type="entry name" value="Isoleucine--tRNA ligase"/>
    <property type="match status" value="1"/>
</dbReference>
<dbReference type="Gene3D" id="1.10.730.20">
    <property type="match status" value="1"/>
</dbReference>
<dbReference type="Gene3D" id="3.40.50.620">
    <property type="entry name" value="HUPs"/>
    <property type="match status" value="2"/>
</dbReference>
<dbReference type="Gene3D" id="1.10.10.830">
    <property type="entry name" value="Ile-tRNA synthetase CP2 domain-like"/>
    <property type="match status" value="1"/>
</dbReference>
<dbReference type="Gene3D" id="3.90.740.10">
    <property type="entry name" value="Valyl/Leucyl/Isoleucyl-tRNA synthetase, editing domain"/>
    <property type="match status" value="1"/>
</dbReference>
<dbReference type="HAMAP" id="MF_02002">
    <property type="entry name" value="Ile_tRNA_synth_type1"/>
    <property type="match status" value="1"/>
</dbReference>
<dbReference type="InterPro" id="IPR001412">
    <property type="entry name" value="aa-tRNA-synth_I_CS"/>
</dbReference>
<dbReference type="InterPro" id="IPR002300">
    <property type="entry name" value="aa-tRNA-synth_Ia"/>
</dbReference>
<dbReference type="InterPro" id="IPR033708">
    <property type="entry name" value="Anticodon_Ile_BEm"/>
</dbReference>
<dbReference type="InterPro" id="IPR002301">
    <property type="entry name" value="Ile-tRNA-ligase"/>
</dbReference>
<dbReference type="InterPro" id="IPR023585">
    <property type="entry name" value="Ile-tRNA-ligase_type1"/>
</dbReference>
<dbReference type="InterPro" id="IPR050081">
    <property type="entry name" value="Ile-tRNA_ligase"/>
</dbReference>
<dbReference type="InterPro" id="IPR013155">
    <property type="entry name" value="M/V/L/I-tRNA-synth_anticd-bd"/>
</dbReference>
<dbReference type="InterPro" id="IPR014729">
    <property type="entry name" value="Rossmann-like_a/b/a_fold"/>
</dbReference>
<dbReference type="InterPro" id="IPR009080">
    <property type="entry name" value="tRNAsynth_Ia_anticodon-bd"/>
</dbReference>
<dbReference type="InterPro" id="IPR009008">
    <property type="entry name" value="Val/Leu/Ile-tRNA-synth_edit"/>
</dbReference>
<dbReference type="InterPro" id="IPR010663">
    <property type="entry name" value="Znf_FPG/IleRS"/>
</dbReference>
<dbReference type="NCBIfam" id="TIGR00392">
    <property type="entry name" value="ileS"/>
    <property type="match status" value="1"/>
</dbReference>
<dbReference type="PANTHER" id="PTHR42765:SF1">
    <property type="entry name" value="ISOLEUCINE--TRNA LIGASE, MITOCHONDRIAL"/>
    <property type="match status" value="1"/>
</dbReference>
<dbReference type="PANTHER" id="PTHR42765">
    <property type="entry name" value="SOLEUCYL-TRNA SYNTHETASE"/>
    <property type="match status" value="1"/>
</dbReference>
<dbReference type="Pfam" id="PF08264">
    <property type="entry name" value="Anticodon_1"/>
    <property type="match status" value="1"/>
</dbReference>
<dbReference type="Pfam" id="PF00133">
    <property type="entry name" value="tRNA-synt_1"/>
    <property type="match status" value="1"/>
</dbReference>
<dbReference type="Pfam" id="PF06827">
    <property type="entry name" value="zf-FPG_IleRS"/>
    <property type="match status" value="1"/>
</dbReference>
<dbReference type="PRINTS" id="PR00984">
    <property type="entry name" value="TRNASYNTHILE"/>
</dbReference>
<dbReference type="SUPFAM" id="SSF47323">
    <property type="entry name" value="Anticodon-binding domain of a subclass of class I aminoacyl-tRNA synthetases"/>
    <property type="match status" value="1"/>
</dbReference>
<dbReference type="SUPFAM" id="SSF52374">
    <property type="entry name" value="Nucleotidylyl transferase"/>
    <property type="match status" value="1"/>
</dbReference>
<dbReference type="SUPFAM" id="SSF50677">
    <property type="entry name" value="ValRS/IleRS/LeuRS editing domain"/>
    <property type="match status" value="1"/>
</dbReference>
<dbReference type="PROSITE" id="PS00178">
    <property type="entry name" value="AA_TRNA_LIGASE_I"/>
    <property type="match status" value="1"/>
</dbReference>
<protein>
    <recommendedName>
        <fullName evidence="1">Isoleucine--tRNA ligase</fullName>
        <ecNumber evidence="1">6.1.1.5</ecNumber>
    </recommendedName>
    <alternativeName>
        <fullName evidence="1">Isoleucyl-tRNA synthetase</fullName>
        <shortName evidence="1">IleRS</shortName>
    </alternativeName>
</protein>
<gene>
    <name evidence="1" type="primary">ileS</name>
    <name type="ordered locus">Mlg_0852</name>
</gene>
<name>SYI_ALKEH</name>
<feature type="chain" id="PRO_1000022040" description="Isoleucine--tRNA ligase">
    <location>
        <begin position="1"/>
        <end position="941"/>
    </location>
</feature>
<feature type="short sequence motif" description="'HIGH' region">
    <location>
        <begin position="58"/>
        <end position="68"/>
    </location>
</feature>
<feature type="short sequence motif" description="'KMSKS' region">
    <location>
        <begin position="603"/>
        <end position="607"/>
    </location>
</feature>
<feature type="binding site" evidence="1">
    <location>
        <position position="562"/>
    </location>
    <ligand>
        <name>L-isoleucyl-5'-AMP</name>
        <dbReference type="ChEBI" id="CHEBI:178002"/>
    </ligand>
</feature>
<feature type="binding site" evidence="1">
    <location>
        <position position="606"/>
    </location>
    <ligand>
        <name>ATP</name>
        <dbReference type="ChEBI" id="CHEBI:30616"/>
    </ligand>
</feature>
<feature type="binding site" evidence="1">
    <location>
        <position position="904"/>
    </location>
    <ligand>
        <name>Zn(2+)</name>
        <dbReference type="ChEBI" id="CHEBI:29105"/>
    </ligand>
</feature>
<feature type="binding site" evidence="1">
    <location>
        <position position="907"/>
    </location>
    <ligand>
        <name>Zn(2+)</name>
        <dbReference type="ChEBI" id="CHEBI:29105"/>
    </ligand>
</feature>
<feature type="binding site" evidence="1">
    <location>
        <position position="924"/>
    </location>
    <ligand>
        <name>Zn(2+)</name>
        <dbReference type="ChEBI" id="CHEBI:29105"/>
    </ligand>
</feature>
<feature type="binding site" evidence="1">
    <location>
        <position position="927"/>
    </location>
    <ligand>
        <name>Zn(2+)</name>
        <dbReference type="ChEBI" id="CHEBI:29105"/>
    </ligand>
</feature>
<comment type="function">
    <text evidence="1">Catalyzes the attachment of isoleucine to tRNA(Ile). As IleRS can inadvertently accommodate and process structurally similar amino acids such as valine, to avoid such errors it has two additional distinct tRNA(Ile)-dependent editing activities. One activity is designated as 'pretransfer' editing and involves the hydrolysis of activated Val-AMP. The other activity is designated 'posttransfer' editing and involves deacylation of mischarged Val-tRNA(Ile).</text>
</comment>
<comment type="catalytic activity">
    <reaction evidence="1">
        <text>tRNA(Ile) + L-isoleucine + ATP = L-isoleucyl-tRNA(Ile) + AMP + diphosphate</text>
        <dbReference type="Rhea" id="RHEA:11060"/>
        <dbReference type="Rhea" id="RHEA-COMP:9666"/>
        <dbReference type="Rhea" id="RHEA-COMP:9695"/>
        <dbReference type="ChEBI" id="CHEBI:30616"/>
        <dbReference type="ChEBI" id="CHEBI:33019"/>
        <dbReference type="ChEBI" id="CHEBI:58045"/>
        <dbReference type="ChEBI" id="CHEBI:78442"/>
        <dbReference type="ChEBI" id="CHEBI:78528"/>
        <dbReference type="ChEBI" id="CHEBI:456215"/>
        <dbReference type="EC" id="6.1.1.5"/>
    </reaction>
</comment>
<comment type="cofactor">
    <cofactor evidence="1">
        <name>Zn(2+)</name>
        <dbReference type="ChEBI" id="CHEBI:29105"/>
    </cofactor>
    <text evidence="1">Binds 1 zinc ion per subunit.</text>
</comment>
<comment type="subunit">
    <text evidence="1">Monomer.</text>
</comment>
<comment type="subcellular location">
    <subcellularLocation>
        <location evidence="1">Cytoplasm</location>
    </subcellularLocation>
</comment>
<comment type="domain">
    <text evidence="1">IleRS has two distinct active sites: one for aminoacylation and one for editing. The misactivated valine is translocated from the active site to the editing site, which sterically excludes the correctly activated isoleucine. The single editing site contains two valyl binding pockets, one specific for each substrate (Val-AMP or Val-tRNA(Ile)).</text>
</comment>
<comment type="similarity">
    <text evidence="1">Belongs to the class-I aminoacyl-tRNA synthetase family. IleS type 1 subfamily.</text>
</comment>
<accession>Q0AAD1</accession>
<reference key="1">
    <citation type="submission" date="2006-08" db="EMBL/GenBank/DDBJ databases">
        <title>Complete sequence of Alkalilimnicola ehrilichei MLHE-1.</title>
        <authorList>
            <person name="Copeland A."/>
            <person name="Lucas S."/>
            <person name="Lapidus A."/>
            <person name="Barry K."/>
            <person name="Detter J.C."/>
            <person name="Glavina del Rio T."/>
            <person name="Hammon N."/>
            <person name="Israni S."/>
            <person name="Dalin E."/>
            <person name="Tice H."/>
            <person name="Pitluck S."/>
            <person name="Sims D."/>
            <person name="Brettin T."/>
            <person name="Bruce D."/>
            <person name="Han C."/>
            <person name="Tapia R."/>
            <person name="Gilna P."/>
            <person name="Schmutz J."/>
            <person name="Larimer F."/>
            <person name="Land M."/>
            <person name="Hauser L."/>
            <person name="Kyrpides N."/>
            <person name="Mikhailova N."/>
            <person name="Oremland R.S."/>
            <person name="Hoeft S.E."/>
            <person name="Switzer-Blum J."/>
            <person name="Kulp T."/>
            <person name="King G."/>
            <person name="Tabita R."/>
            <person name="Witte B."/>
            <person name="Santini J.M."/>
            <person name="Basu P."/>
            <person name="Hollibaugh J.T."/>
            <person name="Xie G."/>
            <person name="Stolz J.F."/>
            <person name="Richardson P."/>
        </authorList>
    </citation>
    <scope>NUCLEOTIDE SEQUENCE [LARGE SCALE GENOMIC DNA]</scope>
    <source>
        <strain>ATCC BAA-1101 / DSM 17681 / MLHE-1</strain>
    </source>
</reference>
<sequence length="941" mass="105903">MSDYKHTLNLPKTGFPMRGNLAKREPERLAGWYQTDLYGRLRRERAGKPRFVLHDGPPYANGDIHIGHAVNKILKDIIIKARSMDGYDVPYVPGWDCHGLPIELMVEKKRGKAGAKVSPRAFRDACREFAASQVDGQREDFKRLGVLGDWDNPYLTMDYRTEADILRALGRIIQRGHVTRGFKPVHWCADCGSALAEAEVEYEEKTSPAIDVRFAVLEPEELDRRAGLGGEAAAAGRVAIPIWTTTPWTLPANQAVALHPELEYVVVAFDDELLVLAAELVESAMARYEVDDYRVVGRCDGAVLEGLRLAHPFLEREVPVILGGHVTTDGGTGAVHTAPGHGQDDYVVGQQYDLPTDNPVDGNGVFLPDTPFFAGQHVFKANPKVVDLLAERGALLHHEPYRHSYPHCWRHKTPILFRATPQWFISLDKAGMREHAMAAIKGVSWHPEWGQARIESMVNGRPDWCISRQRNWGVPIALFVDKRSGEPHPESERLIEAVARRVEEAGVDAWFELDPAELLGADAERYEKVTDILDVWFDSGVTHATVLERRDELQVPADLYLEGSDQHRGWFQSSLLTSVGVRETAPYKGVLTHGFTVDEKGHKMSKSRGNVVAPQKVMDTLGADILRLWVASSDYSAEMAVSDGILKRTADAYRRMRNTARFLLANLNGFEPAEHAVAPPDMLPLDRWAVDRAYLLQQQVREAYERYEFHRIYQMVHNFCVVDLGGFYLDVIKDRQYTTKPDSLARRSCQTALWHVAEGLVRWLAPIISFTAEEIWEHLPGERSDSVLLETWYEGLFPLDDSDPFGRAFWDDVLAVRAGVNRELEQLRNDKVIGASLQAEVQLFCPPELKAKLDRLGDELRFVLITSEARVEDLERAPVESVEVPGENGQGFRLFAAASQHPKCTRCWHHRPDVGHHADHPELCGRCVSNVDGEGETRHYA</sequence>
<evidence type="ECO:0000255" key="1">
    <source>
        <dbReference type="HAMAP-Rule" id="MF_02002"/>
    </source>
</evidence>